<keyword id="KW-0029">Amino-acid transport</keyword>
<keyword id="KW-0997">Cell inner membrane</keyword>
<keyword id="KW-1003">Cell membrane</keyword>
<keyword id="KW-0472">Membrane</keyword>
<keyword id="KW-0769">Symport</keyword>
<keyword id="KW-0812">Transmembrane</keyword>
<keyword id="KW-1133">Transmembrane helix</keyword>
<keyword id="KW-0813">Transport</keyword>
<organism>
    <name type="scientific">Yersinia pestis bv. Antiqua (strain Nepal516)</name>
    <dbReference type="NCBI Taxonomy" id="377628"/>
    <lineage>
        <taxon>Bacteria</taxon>
        <taxon>Pseudomonadati</taxon>
        <taxon>Pseudomonadota</taxon>
        <taxon>Gammaproteobacteria</taxon>
        <taxon>Enterobacterales</taxon>
        <taxon>Yersiniaceae</taxon>
        <taxon>Yersinia</taxon>
    </lineage>
</organism>
<protein>
    <recommendedName>
        <fullName evidence="1">Serine/threonine transporter SstT</fullName>
    </recommendedName>
    <alternativeName>
        <fullName evidence="1">Na(+)/serine-threonine symporter</fullName>
    </alternativeName>
</protein>
<reference key="1">
    <citation type="journal article" date="2006" name="J. Bacteriol.">
        <title>Complete genome sequence of Yersinia pestis strains Antiqua and Nepal516: evidence of gene reduction in an emerging pathogen.</title>
        <authorList>
            <person name="Chain P.S.G."/>
            <person name="Hu P."/>
            <person name="Malfatti S.A."/>
            <person name="Radnedge L."/>
            <person name="Larimer F."/>
            <person name="Vergez L.M."/>
            <person name="Worsham P."/>
            <person name="Chu M.C."/>
            <person name="Andersen G.L."/>
        </authorList>
    </citation>
    <scope>NUCLEOTIDE SEQUENCE [LARGE SCALE GENOMIC DNA]</scope>
    <source>
        <strain>Nepal516</strain>
    </source>
</reference>
<reference key="2">
    <citation type="submission" date="2009-04" db="EMBL/GenBank/DDBJ databases">
        <title>Yersinia pestis Nepal516A whole genome shotgun sequencing project.</title>
        <authorList>
            <person name="Plunkett G. III"/>
            <person name="Anderson B.D."/>
            <person name="Baumler D.J."/>
            <person name="Burland V."/>
            <person name="Cabot E.L."/>
            <person name="Glasner J.D."/>
            <person name="Mau B."/>
            <person name="Neeno-Eckwall E."/>
            <person name="Perna N.T."/>
            <person name="Munk A.C."/>
            <person name="Tapia R."/>
            <person name="Green L.D."/>
            <person name="Rogers Y.C."/>
            <person name="Detter J.C."/>
            <person name="Bruce D.C."/>
            <person name="Brettin T.S."/>
        </authorList>
    </citation>
    <scope>NUCLEOTIDE SEQUENCE [LARGE SCALE GENOMIC DNA]</scope>
    <source>
        <strain>Nepal516</strain>
    </source>
</reference>
<comment type="function">
    <text evidence="1">Involved in the import of serine and threonine into the cell, with the concomitant import of sodium (symport system).</text>
</comment>
<comment type="catalytic activity">
    <reaction evidence="1">
        <text>L-serine(in) + Na(+)(in) = L-serine(out) + Na(+)(out)</text>
        <dbReference type="Rhea" id="RHEA:29575"/>
        <dbReference type="ChEBI" id="CHEBI:29101"/>
        <dbReference type="ChEBI" id="CHEBI:33384"/>
    </reaction>
    <physiologicalReaction direction="right-to-left" evidence="1">
        <dbReference type="Rhea" id="RHEA:29577"/>
    </physiologicalReaction>
</comment>
<comment type="catalytic activity">
    <reaction evidence="1">
        <text>L-threonine(in) + Na(+)(in) = L-threonine(out) + Na(+)(out)</text>
        <dbReference type="Rhea" id="RHEA:69999"/>
        <dbReference type="ChEBI" id="CHEBI:29101"/>
        <dbReference type="ChEBI" id="CHEBI:57926"/>
    </reaction>
    <physiologicalReaction direction="right-to-left" evidence="1">
        <dbReference type="Rhea" id="RHEA:70001"/>
    </physiologicalReaction>
</comment>
<comment type="subcellular location">
    <subcellularLocation>
        <location evidence="1">Cell inner membrane</location>
        <topology evidence="1">Multi-pass membrane protein</topology>
    </subcellularLocation>
</comment>
<comment type="similarity">
    <text evidence="1">Belongs to the dicarboxylate/amino acid:cation symporter (DAACS) (TC 2.A.23) family.</text>
</comment>
<comment type="sequence caution" evidence="2">
    <conflict type="erroneous initiation">
        <sequence resource="EMBL-CDS" id="ABG16785"/>
    </conflict>
</comment>
<accession>Q1CMJ5</accession>
<accession>C4GP09</accession>
<sequence>MEKTQSVFIRFIVNGSLVKQILIGLVAGIVLALVSTPAAIAVGLLGSLFVGALKAVAPVLVLMLVIASIANHKKGQKTSIRPILFLYVLGTFSAALVAVVVSFIYPSTLILVAESADITPPSGIVEVLHGLLNSIIANPIHALLNANYIGILAWAVGLGIALRHAADTTKALINDMSDAVTLVVRVVIRFAPLGIFGLVASTIAATGFGALQLYAQLLVVLIGCMLLVALVVNPLIVYWKIRRNPYPLVFACLRESGVTAFFTRSSAANIPVNMEMCKKMNLNEDTYSISIPLGATINMAGAAITITVLTLAAVHTLGITVDLPTALLLSVVAAICACGASGVAGGSLLLIPLACSMFGIPNDVAMQVVGVGFIIGVLQDSAETALNSSTDVLFTAAVCQAEDAKLANPDPLAAGKSV</sequence>
<feature type="chain" id="PRO_0000309160" description="Serine/threonine transporter SstT">
    <location>
        <begin position="1"/>
        <end position="418"/>
    </location>
</feature>
<feature type="transmembrane region" description="Helical" evidence="1">
    <location>
        <begin position="21"/>
        <end position="41"/>
    </location>
</feature>
<feature type="transmembrane region" description="Helical" evidence="1">
    <location>
        <begin position="49"/>
        <end position="69"/>
    </location>
</feature>
<feature type="transmembrane region" description="Helical" evidence="1">
    <location>
        <begin position="83"/>
        <end position="103"/>
    </location>
</feature>
<feature type="transmembrane region" description="Helical" evidence="1">
    <location>
        <begin position="142"/>
        <end position="162"/>
    </location>
</feature>
<feature type="transmembrane region" description="Helical" evidence="1">
    <location>
        <begin position="190"/>
        <end position="210"/>
    </location>
</feature>
<feature type="transmembrane region" description="Helical" evidence="1">
    <location>
        <begin position="217"/>
        <end position="237"/>
    </location>
</feature>
<feature type="transmembrane region" description="Helical" evidence="1">
    <location>
        <begin position="299"/>
        <end position="319"/>
    </location>
</feature>
<feature type="transmembrane region" description="Helical" evidence="1">
    <location>
        <begin position="331"/>
        <end position="351"/>
    </location>
</feature>
<dbReference type="EMBL" id="CP000305">
    <property type="protein sequence ID" value="ABG16785.1"/>
    <property type="status" value="ALT_INIT"/>
    <property type="molecule type" value="Genomic_DNA"/>
</dbReference>
<dbReference type="EMBL" id="ACNQ01000006">
    <property type="protein sequence ID" value="EEO78241.1"/>
    <property type="molecule type" value="Genomic_DNA"/>
</dbReference>
<dbReference type="RefSeq" id="WP_002216063.1">
    <property type="nucleotide sequence ID" value="NZ_ACNQ01000006.1"/>
</dbReference>
<dbReference type="SMR" id="Q1CMJ5"/>
<dbReference type="GeneID" id="57974032"/>
<dbReference type="KEGG" id="ypn:YPN_0453"/>
<dbReference type="HOGENOM" id="CLU_044581_0_0_6"/>
<dbReference type="Proteomes" id="UP000008936">
    <property type="component" value="Chromosome"/>
</dbReference>
<dbReference type="GO" id="GO:0005886">
    <property type="term" value="C:plasma membrane"/>
    <property type="evidence" value="ECO:0007669"/>
    <property type="project" value="UniProtKB-SubCell"/>
</dbReference>
<dbReference type="GO" id="GO:0005295">
    <property type="term" value="F:neutral L-amino acid:sodium symporter activity"/>
    <property type="evidence" value="ECO:0007669"/>
    <property type="project" value="TreeGrafter"/>
</dbReference>
<dbReference type="GO" id="GO:0032329">
    <property type="term" value="P:serine transport"/>
    <property type="evidence" value="ECO:0007669"/>
    <property type="project" value="InterPro"/>
</dbReference>
<dbReference type="GO" id="GO:0015826">
    <property type="term" value="P:threonine transport"/>
    <property type="evidence" value="ECO:0007669"/>
    <property type="project" value="InterPro"/>
</dbReference>
<dbReference type="FunFam" id="1.10.3860.10:FF:000003">
    <property type="entry name" value="Serine/threonine transporter sstT"/>
    <property type="match status" value="1"/>
</dbReference>
<dbReference type="Gene3D" id="1.10.3860.10">
    <property type="entry name" value="Sodium:dicarboxylate symporter"/>
    <property type="match status" value="1"/>
</dbReference>
<dbReference type="HAMAP" id="MF_01582">
    <property type="entry name" value="Ser_Thr_transp_SstT"/>
    <property type="match status" value="1"/>
</dbReference>
<dbReference type="InterPro" id="IPR001991">
    <property type="entry name" value="Na-dicarboxylate_symporter"/>
</dbReference>
<dbReference type="InterPro" id="IPR036458">
    <property type="entry name" value="Na:dicarbo_symporter_sf"/>
</dbReference>
<dbReference type="InterPro" id="IPR023025">
    <property type="entry name" value="Ser_Thr_transp_SstT"/>
</dbReference>
<dbReference type="NCBIfam" id="NF010151">
    <property type="entry name" value="PRK13628.1"/>
    <property type="match status" value="1"/>
</dbReference>
<dbReference type="PANTHER" id="PTHR42865">
    <property type="entry name" value="PROTON/GLUTAMATE-ASPARTATE SYMPORTER"/>
    <property type="match status" value="1"/>
</dbReference>
<dbReference type="PANTHER" id="PTHR42865:SF8">
    <property type="entry name" value="SERINE_THREONINE TRANSPORTER SSTT"/>
    <property type="match status" value="1"/>
</dbReference>
<dbReference type="Pfam" id="PF00375">
    <property type="entry name" value="SDF"/>
    <property type="match status" value="1"/>
</dbReference>
<dbReference type="PRINTS" id="PR00173">
    <property type="entry name" value="EDTRNSPORT"/>
</dbReference>
<dbReference type="SUPFAM" id="SSF118215">
    <property type="entry name" value="Proton glutamate symport protein"/>
    <property type="match status" value="1"/>
</dbReference>
<gene>
    <name evidence="1" type="primary">sstT</name>
    <name type="ordered locus">YPN_0453</name>
    <name type="ORF">YP516_0469</name>
</gene>
<name>SSTT_YERPN</name>
<evidence type="ECO:0000255" key="1">
    <source>
        <dbReference type="HAMAP-Rule" id="MF_01582"/>
    </source>
</evidence>
<evidence type="ECO:0000305" key="2"/>
<proteinExistence type="inferred from homology"/>